<keyword id="KW-1185">Reference proteome</keyword>
<keyword id="KW-0687">Ribonucleoprotein</keyword>
<keyword id="KW-0689">Ribosomal protein</keyword>
<keyword id="KW-0694">RNA-binding</keyword>
<keyword id="KW-0699">rRNA-binding</keyword>
<comment type="function">
    <text evidence="1">Binds together with bS18 to 16S ribosomal RNA.</text>
</comment>
<comment type="similarity">
    <text evidence="1">Belongs to the bacterial ribosomal protein bS6 family.</text>
</comment>
<feature type="chain" id="PRO_0000229543" description="Small ribosomal subunit protein bS6">
    <location>
        <begin position="1"/>
        <end position="118"/>
    </location>
</feature>
<feature type="region of interest" description="Disordered" evidence="2">
    <location>
        <begin position="98"/>
        <end position="118"/>
    </location>
</feature>
<feature type="compositionally biased region" description="Low complexity" evidence="2">
    <location>
        <begin position="99"/>
        <end position="118"/>
    </location>
</feature>
<evidence type="ECO:0000255" key="1">
    <source>
        <dbReference type="HAMAP-Rule" id="MF_00360"/>
    </source>
</evidence>
<evidence type="ECO:0000256" key="2">
    <source>
        <dbReference type="SAM" id="MobiDB-lite"/>
    </source>
</evidence>
<evidence type="ECO:0000305" key="3"/>
<proteinExistence type="inferred from homology"/>
<dbReference type="EMBL" id="CP000148">
    <property type="protein sequence ID" value="ABB33062.1"/>
    <property type="molecule type" value="Genomic_DNA"/>
</dbReference>
<dbReference type="RefSeq" id="WP_004514572.1">
    <property type="nucleotide sequence ID" value="NC_007517.1"/>
</dbReference>
<dbReference type="SMR" id="Q39RR2"/>
<dbReference type="STRING" id="269799.Gmet_2844"/>
<dbReference type="KEGG" id="gme:Gmet_2844"/>
<dbReference type="eggNOG" id="COG0360">
    <property type="taxonomic scope" value="Bacteria"/>
</dbReference>
<dbReference type="HOGENOM" id="CLU_113441_5_3_7"/>
<dbReference type="Proteomes" id="UP000007073">
    <property type="component" value="Chromosome"/>
</dbReference>
<dbReference type="GO" id="GO:0022627">
    <property type="term" value="C:cytosolic small ribosomal subunit"/>
    <property type="evidence" value="ECO:0007669"/>
    <property type="project" value="TreeGrafter"/>
</dbReference>
<dbReference type="GO" id="GO:0070181">
    <property type="term" value="F:small ribosomal subunit rRNA binding"/>
    <property type="evidence" value="ECO:0007669"/>
    <property type="project" value="TreeGrafter"/>
</dbReference>
<dbReference type="GO" id="GO:0003735">
    <property type="term" value="F:structural constituent of ribosome"/>
    <property type="evidence" value="ECO:0007669"/>
    <property type="project" value="InterPro"/>
</dbReference>
<dbReference type="GO" id="GO:0006412">
    <property type="term" value="P:translation"/>
    <property type="evidence" value="ECO:0007669"/>
    <property type="project" value="UniProtKB-UniRule"/>
</dbReference>
<dbReference type="CDD" id="cd00473">
    <property type="entry name" value="bS6"/>
    <property type="match status" value="1"/>
</dbReference>
<dbReference type="Gene3D" id="3.30.70.60">
    <property type="match status" value="1"/>
</dbReference>
<dbReference type="HAMAP" id="MF_00360">
    <property type="entry name" value="Ribosomal_bS6"/>
    <property type="match status" value="1"/>
</dbReference>
<dbReference type="InterPro" id="IPR000529">
    <property type="entry name" value="Ribosomal_bS6"/>
</dbReference>
<dbReference type="InterPro" id="IPR035980">
    <property type="entry name" value="Ribosomal_bS6_sf"/>
</dbReference>
<dbReference type="InterPro" id="IPR020814">
    <property type="entry name" value="Ribosomal_S6_plastid/chlpt"/>
</dbReference>
<dbReference type="InterPro" id="IPR014717">
    <property type="entry name" value="Transl_elong_EF1B/ribsomal_bS6"/>
</dbReference>
<dbReference type="NCBIfam" id="TIGR00166">
    <property type="entry name" value="S6"/>
    <property type="match status" value="1"/>
</dbReference>
<dbReference type="PANTHER" id="PTHR21011">
    <property type="entry name" value="MITOCHONDRIAL 28S RIBOSOMAL PROTEIN S6"/>
    <property type="match status" value="1"/>
</dbReference>
<dbReference type="PANTHER" id="PTHR21011:SF1">
    <property type="entry name" value="SMALL RIBOSOMAL SUBUNIT PROTEIN BS6M"/>
    <property type="match status" value="1"/>
</dbReference>
<dbReference type="Pfam" id="PF01250">
    <property type="entry name" value="Ribosomal_S6"/>
    <property type="match status" value="1"/>
</dbReference>
<dbReference type="SUPFAM" id="SSF54995">
    <property type="entry name" value="Ribosomal protein S6"/>
    <property type="match status" value="1"/>
</dbReference>
<accession>Q39RR2</accession>
<reference key="1">
    <citation type="journal article" date="2009" name="BMC Microbiol.">
        <title>The genome sequence of Geobacter metallireducens: features of metabolism, physiology and regulation common and dissimilar to Geobacter sulfurreducens.</title>
        <authorList>
            <person name="Aklujkar M."/>
            <person name="Krushkal J."/>
            <person name="DiBartolo G."/>
            <person name="Lapidus A."/>
            <person name="Land M.L."/>
            <person name="Lovley D.R."/>
        </authorList>
    </citation>
    <scope>NUCLEOTIDE SEQUENCE [LARGE SCALE GENOMIC DNA]</scope>
    <source>
        <strain>ATCC 53774 / DSM 7210 / GS-15</strain>
    </source>
</reference>
<sequence length="118" mass="13230">MVRKYETVVIVQPDLGDDELKGLNAKVTDIIATMKGDLHRLEDWGVRKLAYPINKSARGRYYYVRFDGDAALIAELERRLRLDDKVLRYQSVKIEKETAAPAAKVAPVETAPAAEAAE</sequence>
<name>RS6_GEOMG</name>
<organism>
    <name type="scientific">Geobacter metallireducens (strain ATCC 53774 / DSM 7210 / GS-15)</name>
    <dbReference type="NCBI Taxonomy" id="269799"/>
    <lineage>
        <taxon>Bacteria</taxon>
        <taxon>Pseudomonadati</taxon>
        <taxon>Thermodesulfobacteriota</taxon>
        <taxon>Desulfuromonadia</taxon>
        <taxon>Geobacterales</taxon>
        <taxon>Geobacteraceae</taxon>
        <taxon>Geobacter</taxon>
    </lineage>
</organism>
<gene>
    <name evidence="1" type="primary">rpsF</name>
    <name type="ordered locus">Gmet_2844</name>
</gene>
<protein>
    <recommendedName>
        <fullName evidence="1">Small ribosomal subunit protein bS6</fullName>
    </recommendedName>
    <alternativeName>
        <fullName evidence="3">30S ribosomal protein S6</fullName>
    </alternativeName>
</protein>